<keyword id="KW-0255">Endonuclease</keyword>
<keyword id="KW-0378">Hydrolase</keyword>
<keyword id="KW-0479">Metal-binding</keyword>
<keyword id="KW-0540">Nuclease</keyword>
<keyword id="KW-1185">Reference proteome</keyword>
<keyword id="KW-0819">tRNA processing</keyword>
<keyword id="KW-0862">Zinc</keyword>
<organism>
    <name type="scientific">Streptococcus pyogenes serotype M1</name>
    <dbReference type="NCBI Taxonomy" id="301447"/>
    <lineage>
        <taxon>Bacteria</taxon>
        <taxon>Bacillati</taxon>
        <taxon>Bacillota</taxon>
        <taxon>Bacilli</taxon>
        <taxon>Lactobacillales</taxon>
        <taxon>Streptococcaceae</taxon>
        <taxon>Streptococcus</taxon>
    </lineage>
</organism>
<protein>
    <recommendedName>
        <fullName evidence="1">Ribonuclease Z</fullName>
        <shortName evidence="1">RNase Z</shortName>
        <ecNumber evidence="1">3.1.26.11</ecNumber>
    </recommendedName>
    <alternativeName>
        <fullName evidence="1">tRNA 3 endonuclease</fullName>
    </alternativeName>
    <alternativeName>
        <fullName evidence="1">tRNase Z</fullName>
    </alternativeName>
</protein>
<evidence type="ECO:0000255" key="1">
    <source>
        <dbReference type="HAMAP-Rule" id="MF_01818"/>
    </source>
</evidence>
<name>RNZ_STRP1</name>
<dbReference type="EC" id="3.1.26.11" evidence="1"/>
<dbReference type="EMBL" id="AE004092">
    <property type="protein sequence ID" value="AAK33839.1"/>
    <property type="molecule type" value="Genomic_DNA"/>
</dbReference>
<dbReference type="EMBL" id="CP000017">
    <property type="protein sequence ID" value="AAZ51343.1"/>
    <property type="molecule type" value="Genomic_DNA"/>
</dbReference>
<dbReference type="RefSeq" id="NP_269118.1">
    <property type="nucleotide sequence ID" value="NC_002737.2"/>
</dbReference>
<dbReference type="SMR" id="P60199"/>
<dbReference type="PaxDb" id="1314-HKU360_00737"/>
<dbReference type="KEGG" id="spy:SPy_0924"/>
<dbReference type="KEGG" id="spz:M5005_Spy0725"/>
<dbReference type="PATRIC" id="fig|160490.10.peg.795"/>
<dbReference type="HOGENOM" id="CLU_031317_2_0_9"/>
<dbReference type="OMA" id="GTQRQMM"/>
<dbReference type="Proteomes" id="UP000000750">
    <property type="component" value="Chromosome"/>
</dbReference>
<dbReference type="GO" id="GO:0042781">
    <property type="term" value="F:3'-tRNA processing endoribonuclease activity"/>
    <property type="evidence" value="ECO:0007669"/>
    <property type="project" value="UniProtKB-UniRule"/>
</dbReference>
<dbReference type="GO" id="GO:0008270">
    <property type="term" value="F:zinc ion binding"/>
    <property type="evidence" value="ECO:0007669"/>
    <property type="project" value="UniProtKB-UniRule"/>
</dbReference>
<dbReference type="CDD" id="cd07717">
    <property type="entry name" value="RNaseZ_ZiPD-like_MBL-fold"/>
    <property type="match status" value="1"/>
</dbReference>
<dbReference type="FunFam" id="3.60.15.10:FF:000002">
    <property type="entry name" value="Ribonuclease Z"/>
    <property type="match status" value="1"/>
</dbReference>
<dbReference type="Gene3D" id="3.60.15.10">
    <property type="entry name" value="Ribonuclease Z/Hydroxyacylglutathione hydrolase-like"/>
    <property type="match status" value="1"/>
</dbReference>
<dbReference type="HAMAP" id="MF_01818">
    <property type="entry name" value="RNase_Z_BN"/>
    <property type="match status" value="1"/>
</dbReference>
<dbReference type="InterPro" id="IPR001279">
    <property type="entry name" value="Metallo-B-lactamas"/>
</dbReference>
<dbReference type="InterPro" id="IPR036866">
    <property type="entry name" value="RibonucZ/Hydroxyglut_hydro"/>
</dbReference>
<dbReference type="InterPro" id="IPR013471">
    <property type="entry name" value="RNase_Z/BN"/>
</dbReference>
<dbReference type="NCBIfam" id="NF000801">
    <property type="entry name" value="PRK00055.1-3"/>
    <property type="match status" value="1"/>
</dbReference>
<dbReference type="NCBIfam" id="TIGR02651">
    <property type="entry name" value="RNase_Z"/>
    <property type="match status" value="1"/>
</dbReference>
<dbReference type="PANTHER" id="PTHR46018">
    <property type="entry name" value="ZINC PHOSPHODIESTERASE ELAC PROTEIN 1"/>
    <property type="match status" value="1"/>
</dbReference>
<dbReference type="PANTHER" id="PTHR46018:SF2">
    <property type="entry name" value="ZINC PHOSPHODIESTERASE ELAC PROTEIN 1"/>
    <property type="match status" value="1"/>
</dbReference>
<dbReference type="Pfam" id="PF00753">
    <property type="entry name" value="Lactamase_B"/>
    <property type="match status" value="1"/>
</dbReference>
<dbReference type="SUPFAM" id="SSF56281">
    <property type="entry name" value="Metallo-hydrolase/oxidoreductase"/>
    <property type="match status" value="1"/>
</dbReference>
<reference key="1">
    <citation type="journal article" date="2001" name="Proc. Natl. Acad. Sci. U.S.A.">
        <title>Complete genome sequence of an M1 strain of Streptococcus pyogenes.</title>
        <authorList>
            <person name="Ferretti J.J."/>
            <person name="McShan W.M."/>
            <person name="Ajdic D.J."/>
            <person name="Savic D.J."/>
            <person name="Savic G."/>
            <person name="Lyon K."/>
            <person name="Primeaux C."/>
            <person name="Sezate S."/>
            <person name="Suvorov A.N."/>
            <person name="Kenton S."/>
            <person name="Lai H.S."/>
            <person name="Lin S.P."/>
            <person name="Qian Y."/>
            <person name="Jia H.G."/>
            <person name="Najar F.Z."/>
            <person name="Ren Q."/>
            <person name="Zhu H."/>
            <person name="Song L."/>
            <person name="White J."/>
            <person name="Yuan X."/>
            <person name="Clifton S.W."/>
            <person name="Roe B.A."/>
            <person name="McLaughlin R.E."/>
        </authorList>
    </citation>
    <scope>NUCLEOTIDE SEQUENCE [LARGE SCALE GENOMIC DNA]</scope>
    <source>
        <strain>ATCC 700294 / SF370 / Serotype M1</strain>
    </source>
</reference>
<reference key="2">
    <citation type="journal article" date="2005" name="J. Infect. Dis.">
        <title>Evolutionary origin and emergence of a highly successful clone of serotype M1 group A Streptococcus involved multiple horizontal gene transfer events.</title>
        <authorList>
            <person name="Sumby P."/>
            <person name="Porcella S.F."/>
            <person name="Madrigal A.G."/>
            <person name="Barbian K.D."/>
            <person name="Virtaneva K."/>
            <person name="Ricklefs S.M."/>
            <person name="Sturdevant D.E."/>
            <person name="Graham M.R."/>
            <person name="Vuopio-Varkila J."/>
            <person name="Hoe N.P."/>
            <person name="Musser J.M."/>
        </authorList>
    </citation>
    <scope>NUCLEOTIDE SEQUENCE [LARGE SCALE GENOMIC DNA]</scope>
    <source>
        <strain>ATCC BAA-947 / MGAS5005 / Serotype M1</strain>
    </source>
</reference>
<gene>
    <name evidence="1" type="primary">rnz</name>
    <name type="synonym">elaC</name>
    <name type="ordered locus">SPy_0924</name>
    <name type="ordered locus">M5005_Spy0725</name>
</gene>
<sequence length="309" mass="34430">MELQFLGTGAGQPAKQRNVSSLALKLLDEINEVWMFDCGEGTQRQILETTIKPRKIRKIFITHLHGDHIFGLPGFLSSRSFQASEEQTDLDIYGPIGIKTYVLTSLKVSGARVPYQIHFHEFDDKSLGKIMETDKFEVYAERLAHTIFCMGYRVVQKDLEGTLDAEALKAAGVPFGPLFGKIKNGQDVELEDGRLICAKDYISAPKKGKIITIIGDTRKTSASVKLAKDADVLVHESTYGKGDERIARNHGHSTNMQAAQIAHEAGAKRLLLNHVSARFLGRDCRQMEKDAATIFENVKMVQDLEEVII</sequence>
<feature type="chain" id="PRO_0000155908" description="Ribonuclease Z">
    <location>
        <begin position="1"/>
        <end position="309"/>
    </location>
</feature>
<feature type="active site" description="Proton acceptor" evidence="1">
    <location>
        <position position="67"/>
    </location>
</feature>
<feature type="binding site" evidence="1">
    <location>
        <position position="63"/>
    </location>
    <ligand>
        <name>Zn(2+)</name>
        <dbReference type="ChEBI" id="CHEBI:29105"/>
        <label>1</label>
        <note>catalytic</note>
    </ligand>
</feature>
<feature type="binding site" evidence="1">
    <location>
        <position position="65"/>
    </location>
    <ligand>
        <name>Zn(2+)</name>
        <dbReference type="ChEBI" id="CHEBI:29105"/>
        <label>1</label>
        <note>catalytic</note>
    </ligand>
</feature>
<feature type="binding site" evidence="1">
    <location>
        <position position="67"/>
    </location>
    <ligand>
        <name>Zn(2+)</name>
        <dbReference type="ChEBI" id="CHEBI:29105"/>
        <label>2</label>
        <note>catalytic</note>
    </ligand>
</feature>
<feature type="binding site" evidence="1">
    <location>
        <position position="68"/>
    </location>
    <ligand>
        <name>Zn(2+)</name>
        <dbReference type="ChEBI" id="CHEBI:29105"/>
        <label>2</label>
        <note>catalytic</note>
    </ligand>
</feature>
<feature type="binding site" evidence="1">
    <location>
        <position position="145"/>
    </location>
    <ligand>
        <name>Zn(2+)</name>
        <dbReference type="ChEBI" id="CHEBI:29105"/>
        <label>1</label>
        <note>catalytic</note>
    </ligand>
</feature>
<feature type="binding site" evidence="1">
    <location>
        <position position="216"/>
    </location>
    <ligand>
        <name>Zn(2+)</name>
        <dbReference type="ChEBI" id="CHEBI:29105"/>
        <label>1</label>
        <note>catalytic</note>
    </ligand>
</feature>
<feature type="binding site" evidence="1">
    <location>
        <position position="216"/>
    </location>
    <ligand>
        <name>Zn(2+)</name>
        <dbReference type="ChEBI" id="CHEBI:29105"/>
        <label>2</label>
        <note>catalytic</note>
    </ligand>
</feature>
<feature type="binding site" evidence="1">
    <location>
        <position position="274"/>
    </location>
    <ligand>
        <name>Zn(2+)</name>
        <dbReference type="ChEBI" id="CHEBI:29105"/>
        <label>2</label>
        <note>catalytic</note>
    </ligand>
</feature>
<proteinExistence type="inferred from homology"/>
<accession>P60199</accession>
<accession>Q48Z75</accession>
<accession>Q9A056</accession>
<comment type="function">
    <text evidence="1">Zinc phosphodiesterase, which displays some tRNA 3'-processing endonuclease activity. Probably involved in tRNA maturation, by removing a 3'-trailer from precursor tRNA.</text>
</comment>
<comment type="catalytic activity">
    <reaction evidence="1">
        <text>Endonucleolytic cleavage of RNA, removing extra 3' nucleotides from tRNA precursor, generating 3' termini of tRNAs. A 3'-hydroxy group is left at the tRNA terminus and a 5'-phosphoryl group is left at the trailer molecule.</text>
        <dbReference type="EC" id="3.1.26.11"/>
    </reaction>
</comment>
<comment type="cofactor">
    <cofactor evidence="1">
        <name>Zn(2+)</name>
        <dbReference type="ChEBI" id="CHEBI:29105"/>
    </cofactor>
    <text evidence="1">Binds 2 Zn(2+) ions.</text>
</comment>
<comment type="subunit">
    <text evidence="1">Homodimer.</text>
</comment>
<comment type="similarity">
    <text evidence="1">Belongs to the RNase Z family.</text>
</comment>